<comment type="function">
    <text evidence="1">Transaldolase is important for the balance of metabolites in the pentose-phosphate pathway.</text>
</comment>
<comment type="catalytic activity">
    <reaction evidence="1">
        <text>D-sedoheptulose 7-phosphate + D-glyceraldehyde 3-phosphate = D-erythrose 4-phosphate + beta-D-fructose 6-phosphate</text>
        <dbReference type="Rhea" id="RHEA:17053"/>
        <dbReference type="ChEBI" id="CHEBI:16897"/>
        <dbReference type="ChEBI" id="CHEBI:57483"/>
        <dbReference type="ChEBI" id="CHEBI:57634"/>
        <dbReference type="ChEBI" id="CHEBI:59776"/>
        <dbReference type="EC" id="2.2.1.2"/>
    </reaction>
</comment>
<comment type="pathway">
    <text evidence="1">Carbohydrate degradation; pentose phosphate pathway; D-glyceraldehyde 3-phosphate and beta-D-fructose 6-phosphate from D-ribose 5-phosphate and D-xylulose 5-phosphate (non-oxidative stage): step 2/3.</text>
</comment>
<comment type="subcellular location">
    <subcellularLocation>
        <location evidence="1">Cytoplasm</location>
    </subcellularLocation>
</comment>
<comment type="similarity">
    <text evidence="1 2">Belongs to the transaldolase family. Type 1 subfamily.</text>
</comment>
<proteinExistence type="inferred from homology"/>
<protein>
    <recommendedName>
        <fullName evidence="1">Transaldolase</fullName>
        <ecNumber evidence="1">2.2.1.2</ecNumber>
    </recommendedName>
</protein>
<name>TAL_CHLMU</name>
<evidence type="ECO:0000255" key="1">
    <source>
        <dbReference type="HAMAP-Rule" id="MF_00492"/>
    </source>
</evidence>
<evidence type="ECO:0000305" key="2"/>
<dbReference type="EC" id="2.2.1.2" evidence="1"/>
<dbReference type="EMBL" id="AE002160">
    <property type="protein sequence ID" value="AAF39419.1"/>
    <property type="molecule type" value="Genomic_DNA"/>
</dbReference>
<dbReference type="PIR" id="E81686">
    <property type="entry name" value="E81686"/>
</dbReference>
<dbReference type="RefSeq" id="WP_010230911.1">
    <property type="nucleotide sequence ID" value="NZ_CP063055.1"/>
</dbReference>
<dbReference type="SMR" id="Q9PK80"/>
<dbReference type="GeneID" id="1245946"/>
<dbReference type="KEGG" id="cmu:TC_0587"/>
<dbReference type="eggNOG" id="COG0176">
    <property type="taxonomic scope" value="Bacteria"/>
</dbReference>
<dbReference type="HOGENOM" id="CLU_047470_0_1_0"/>
<dbReference type="OrthoDB" id="9807051at2"/>
<dbReference type="UniPathway" id="UPA00115">
    <property type="reaction ID" value="UER00414"/>
</dbReference>
<dbReference type="Proteomes" id="UP000000800">
    <property type="component" value="Chromosome"/>
</dbReference>
<dbReference type="GO" id="GO:0005737">
    <property type="term" value="C:cytoplasm"/>
    <property type="evidence" value="ECO:0007669"/>
    <property type="project" value="UniProtKB-SubCell"/>
</dbReference>
<dbReference type="GO" id="GO:0004801">
    <property type="term" value="F:transaldolase activity"/>
    <property type="evidence" value="ECO:0000250"/>
    <property type="project" value="UniProtKB"/>
</dbReference>
<dbReference type="GO" id="GO:0005975">
    <property type="term" value="P:carbohydrate metabolic process"/>
    <property type="evidence" value="ECO:0007669"/>
    <property type="project" value="InterPro"/>
</dbReference>
<dbReference type="GO" id="GO:0006098">
    <property type="term" value="P:pentose-phosphate shunt"/>
    <property type="evidence" value="ECO:0007669"/>
    <property type="project" value="UniProtKB-UniRule"/>
</dbReference>
<dbReference type="CDD" id="cd00957">
    <property type="entry name" value="Transaldolase_TalAB"/>
    <property type="match status" value="1"/>
</dbReference>
<dbReference type="FunFam" id="3.20.20.70:FF:000163">
    <property type="entry name" value="Transaldolase B"/>
    <property type="match status" value="1"/>
</dbReference>
<dbReference type="Gene3D" id="3.20.20.70">
    <property type="entry name" value="Aldolase class I"/>
    <property type="match status" value="1"/>
</dbReference>
<dbReference type="HAMAP" id="MF_00492">
    <property type="entry name" value="Transaldolase_1"/>
    <property type="match status" value="1"/>
</dbReference>
<dbReference type="InterPro" id="IPR013785">
    <property type="entry name" value="Aldolase_TIM"/>
</dbReference>
<dbReference type="InterPro" id="IPR001585">
    <property type="entry name" value="TAL/FSA"/>
</dbReference>
<dbReference type="InterPro" id="IPR004730">
    <property type="entry name" value="Transaldolase_1"/>
</dbReference>
<dbReference type="InterPro" id="IPR018225">
    <property type="entry name" value="Transaldolase_AS"/>
</dbReference>
<dbReference type="NCBIfam" id="TIGR00874">
    <property type="entry name" value="talAB"/>
    <property type="match status" value="1"/>
</dbReference>
<dbReference type="PANTHER" id="PTHR10683">
    <property type="entry name" value="TRANSALDOLASE"/>
    <property type="match status" value="1"/>
</dbReference>
<dbReference type="PANTHER" id="PTHR10683:SF18">
    <property type="entry name" value="TRANSALDOLASE"/>
    <property type="match status" value="1"/>
</dbReference>
<dbReference type="Pfam" id="PF00923">
    <property type="entry name" value="TAL_FSA"/>
    <property type="match status" value="1"/>
</dbReference>
<dbReference type="SUPFAM" id="SSF51569">
    <property type="entry name" value="Aldolase"/>
    <property type="match status" value="1"/>
</dbReference>
<dbReference type="PROSITE" id="PS01054">
    <property type="entry name" value="TRANSALDOLASE_1"/>
    <property type="match status" value="1"/>
</dbReference>
<dbReference type="PROSITE" id="PS00958">
    <property type="entry name" value="TRANSALDOLASE_2"/>
    <property type="match status" value="1"/>
</dbReference>
<gene>
    <name evidence="1" type="primary">tal</name>
    <name type="ordered locus">TC_0587</name>
</gene>
<organism>
    <name type="scientific">Chlamydia muridarum (strain MoPn / Nigg)</name>
    <dbReference type="NCBI Taxonomy" id="243161"/>
    <lineage>
        <taxon>Bacteria</taxon>
        <taxon>Pseudomonadati</taxon>
        <taxon>Chlamydiota</taxon>
        <taxon>Chlamydiia</taxon>
        <taxon>Chlamydiales</taxon>
        <taxon>Chlamydiaceae</taxon>
        <taxon>Chlamydia/Chlamydophila group</taxon>
        <taxon>Chlamydia</taxon>
    </lineage>
</organism>
<keyword id="KW-0963">Cytoplasm</keyword>
<keyword id="KW-0570">Pentose shunt</keyword>
<keyword id="KW-0704">Schiff base</keyword>
<keyword id="KW-0808">Transferase</keyword>
<sequence>MSSQFDQLKLWSVLVGDSGDPDLIKTLDVQDATTNPSLILKVAQEPKYQSMLTEAISWGIRQNGDDVQTLTFVLDKIQVNLGLEILKYVPGRVSLEIDARLSFNTEAMVQRAIFLSQLFEKMGGDKKRLLIKIPGTWEGIRAAEVLENQGIACNVTLIFSLVQAIAAAKAKVTLVSPFVGRIYDWWIAAYGAEGYSIEADPGVASVANIYSYYKKFDIPTQIMAASFRTKEQVLALAGCDFLTISPKILEELKKEQQPVERKLSVEEAKKLDIQPVELSESVFRFLMNEDAMATEKLAEGIRIFSGDTQILESAVTEFIRQIAAQEA</sequence>
<reference key="1">
    <citation type="journal article" date="2000" name="Nucleic Acids Res.">
        <title>Genome sequences of Chlamydia trachomatis MoPn and Chlamydia pneumoniae AR39.</title>
        <authorList>
            <person name="Read T.D."/>
            <person name="Brunham R.C."/>
            <person name="Shen C."/>
            <person name="Gill S.R."/>
            <person name="Heidelberg J.F."/>
            <person name="White O."/>
            <person name="Hickey E.K."/>
            <person name="Peterson J.D."/>
            <person name="Utterback T.R."/>
            <person name="Berry K.J."/>
            <person name="Bass S."/>
            <person name="Linher K.D."/>
            <person name="Weidman J.F."/>
            <person name="Khouri H.M."/>
            <person name="Craven B."/>
            <person name="Bowman C."/>
            <person name="Dodson R.J."/>
            <person name="Gwinn M.L."/>
            <person name="Nelson W.C."/>
            <person name="DeBoy R.T."/>
            <person name="Kolonay J.F."/>
            <person name="McClarty G."/>
            <person name="Salzberg S.L."/>
            <person name="Eisen J.A."/>
            <person name="Fraser C.M."/>
        </authorList>
    </citation>
    <scope>NUCLEOTIDE SEQUENCE [LARGE SCALE GENOMIC DNA]</scope>
    <source>
        <strain>MoPn / Nigg</strain>
    </source>
</reference>
<accession>Q9PK80</accession>
<feature type="chain" id="PRO_0000173587" description="Transaldolase">
    <location>
        <begin position="1"/>
        <end position="327"/>
    </location>
</feature>
<feature type="active site" description="Schiff-base intermediate with substrate" evidence="1">
    <location>
        <position position="132"/>
    </location>
</feature>